<organism>
    <name type="scientific">Thermotoga maritima (strain ATCC 43589 / DSM 3109 / JCM 10099 / NBRC 100826 / MSB8)</name>
    <dbReference type="NCBI Taxonomy" id="243274"/>
    <lineage>
        <taxon>Bacteria</taxon>
        <taxon>Thermotogati</taxon>
        <taxon>Thermotogota</taxon>
        <taxon>Thermotogae</taxon>
        <taxon>Thermotogales</taxon>
        <taxon>Thermotogaceae</taxon>
        <taxon>Thermotoga</taxon>
    </lineage>
</organism>
<accession>Q9X1V0</accession>
<proteinExistence type="inferred from homology"/>
<dbReference type="EMBL" id="AE000512">
    <property type="protein sequence ID" value="AAD36682.1"/>
    <property type="molecule type" value="Genomic_DNA"/>
</dbReference>
<dbReference type="PIR" id="A72232">
    <property type="entry name" value="A72232"/>
</dbReference>
<dbReference type="RefSeq" id="NP_229415.1">
    <property type="nucleotide sequence ID" value="NC_000853.1"/>
</dbReference>
<dbReference type="RefSeq" id="WP_004082074.1">
    <property type="nucleotide sequence ID" value="NZ_CP011107.1"/>
</dbReference>
<dbReference type="SMR" id="Q9X1V0"/>
<dbReference type="FunCoup" id="Q9X1V0">
    <property type="interactions" value="309"/>
</dbReference>
<dbReference type="STRING" id="243274.TM_1615"/>
<dbReference type="PaxDb" id="243274-THEMA_06175"/>
<dbReference type="EnsemblBacteria" id="AAD36682">
    <property type="protein sequence ID" value="AAD36682"/>
    <property type="gene ID" value="TM_1615"/>
</dbReference>
<dbReference type="KEGG" id="tma:TM1615"/>
<dbReference type="KEGG" id="tmi:THEMA_06175"/>
<dbReference type="KEGG" id="tmm:Tmari_1623"/>
<dbReference type="KEGG" id="tmw:THMA_1655"/>
<dbReference type="eggNOG" id="COG0636">
    <property type="taxonomic scope" value="Bacteria"/>
</dbReference>
<dbReference type="InParanoid" id="Q9X1V0"/>
<dbReference type="OrthoDB" id="9810379at2"/>
<dbReference type="Proteomes" id="UP000008183">
    <property type="component" value="Chromosome"/>
</dbReference>
<dbReference type="GO" id="GO:0005886">
    <property type="term" value="C:plasma membrane"/>
    <property type="evidence" value="ECO:0007669"/>
    <property type="project" value="UniProtKB-SubCell"/>
</dbReference>
<dbReference type="GO" id="GO:0045259">
    <property type="term" value="C:proton-transporting ATP synthase complex"/>
    <property type="evidence" value="ECO:0007669"/>
    <property type="project" value="UniProtKB-KW"/>
</dbReference>
<dbReference type="GO" id="GO:0033177">
    <property type="term" value="C:proton-transporting two-sector ATPase complex, proton-transporting domain"/>
    <property type="evidence" value="ECO:0007669"/>
    <property type="project" value="InterPro"/>
</dbReference>
<dbReference type="GO" id="GO:0008289">
    <property type="term" value="F:lipid binding"/>
    <property type="evidence" value="ECO:0007669"/>
    <property type="project" value="UniProtKB-KW"/>
</dbReference>
<dbReference type="GO" id="GO:0046933">
    <property type="term" value="F:proton-transporting ATP synthase activity, rotational mechanism"/>
    <property type="evidence" value="ECO:0007669"/>
    <property type="project" value="UniProtKB-UniRule"/>
</dbReference>
<dbReference type="GO" id="GO:0015986">
    <property type="term" value="P:proton motive force-driven ATP synthesis"/>
    <property type="evidence" value="ECO:0000318"/>
    <property type="project" value="GO_Central"/>
</dbReference>
<dbReference type="CDD" id="cd18121">
    <property type="entry name" value="ATP-synt_Fo_c"/>
    <property type="match status" value="1"/>
</dbReference>
<dbReference type="FunFam" id="1.20.20.10:FF:000019">
    <property type="entry name" value="ATP synthase subunit c"/>
    <property type="match status" value="1"/>
</dbReference>
<dbReference type="Gene3D" id="1.20.20.10">
    <property type="entry name" value="F1F0 ATP synthase subunit C"/>
    <property type="match status" value="1"/>
</dbReference>
<dbReference type="HAMAP" id="MF_01396">
    <property type="entry name" value="ATP_synth_c_bact"/>
    <property type="match status" value="1"/>
</dbReference>
<dbReference type="InterPro" id="IPR005953">
    <property type="entry name" value="ATP_synth_csu_bac/chlpt"/>
</dbReference>
<dbReference type="InterPro" id="IPR000454">
    <property type="entry name" value="ATP_synth_F0_csu"/>
</dbReference>
<dbReference type="InterPro" id="IPR020537">
    <property type="entry name" value="ATP_synth_F0_csu_DDCD_BS"/>
</dbReference>
<dbReference type="InterPro" id="IPR038662">
    <property type="entry name" value="ATP_synth_F0_csu_sf"/>
</dbReference>
<dbReference type="InterPro" id="IPR002379">
    <property type="entry name" value="ATPase_proteolipid_c-like_dom"/>
</dbReference>
<dbReference type="InterPro" id="IPR035921">
    <property type="entry name" value="F/V-ATP_Csub_sf"/>
</dbReference>
<dbReference type="NCBIfam" id="TIGR01260">
    <property type="entry name" value="ATP_synt_c"/>
    <property type="match status" value="1"/>
</dbReference>
<dbReference type="NCBIfam" id="NF009999">
    <property type="entry name" value="PRK13471.1"/>
    <property type="match status" value="1"/>
</dbReference>
<dbReference type="Pfam" id="PF00137">
    <property type="entry name" value="ATP-synt_C"/>
    <property type="match status" value="1"/>
</dbReference>
<dbReference type="PRINTS" id="PR00124">
    <property type="entry name" value="ATPASEC"/>
</dbReference>
<dbReference type="SUPFAM" id="SSF81333">
    <property type="entry name" value="F1F0 ATP synthase subunit C"/>
    <property type="match status" value="1"/>
</dbReference>
<dbReference type="PROSITE" id="PS00605">
    <property type="entry name" value="ATPASE_C"/>
    <property type="match status" value="1"/>
</dbReference>
<protein>
    <recommendedName>
        <fullName evidence="1">ATP synthase subunit c</fullName>
    </recommendedName>
    <alternativeName>
        <fullName evidence="1">ATP synthase F(0) sector subunit c</fullName>
    </alternativeName>
    <alternativeName>
        <fullName evidence="1">F-type ATPase subunit c</fullName>
        <shortName evidence="1">F-ATPase subunit c</shortName>
    </alternativeName>
    <alternativeName>
        <fullName evidence="1">Lipid-binding protein</fullName>
    </alternativeName>
</protein>
<reference key="1">
    <citation type="journal article" date="1999" name="Nature">
        <title>Evidence for lateral gene transfer between Archaea and Bacteria from genome sequence of Thermotoga maritima.</title>
        <authorList>
            <person name="Nelson K.E."/>
            <person name="Clayton R.A."/>
            <person name="Gill S.R."/>
            <person name="Gwinn M.L."/>
            <person name="Dodson R.J."/>
            <person name="Haft D.H."/>
            <person name="Hickey E.K."/>
            <person name="Peterson J.D."/>
            <person name="Nelson W.C."/>
            <person name="Ketchum K.A."/>
            <person name="McDonald L.A."/>
            <person name="Utterback T.R."/>
            <person name="Malek J.A."/>
            <person name="Linher K.D."/>
            <person name="Garrett M.M."/>
            <person name="Stewart A.M."/>
            <person name="Cotton M.D."/>
            <person name="Pratt M.S."/>
            <person name="Phillips C.A."/>
            <person name="Richardson D.L."/>
            <person name="Heidelberg J.F."/>
            <person name="Sutton G.G."/>
            <person name="Fleischmann R.D."/>
            <person name="Eisen J.A."/>
            <person name="White O."/>
            <person name="Salzberg S.L."/>
            <person name="Smith H.O."/>
            <person name="Venter J.C."/>
            <person name="Fraser C.M."/>
        </authorList>
    </citation>
    <scope>NUCLEOTIDE SEQUENCE [LARGE SCALE GENOMIC DNA]</scope>
    <source>
        <strain>ATCC 43589 / DSM 3109 / JCM 10099 / NBRC 100826 / MSB8</strain>
    </source>
</reference>
<gene>
    <name evidence="1" type="primary">atpE</name>
    <name type="ordered locus">TM_1615</name>
</gene>
<name>ATPL_THEMA</name>
<keyword id="KW-0066">ATP synthesis</keyword>
<keyword id="KW-0997">Cell inner membrane</keyword>
<keyword id="KW-1003">Cell membrane</keyword>
<keyword id="KW-0138">CF(0)</keyword>
<keyword id="KW-0375">Hydrogen ion transport</keyword>
<keyword id="KW-0406">Ion transport</keyword>
<keyword id="KW-0446">Lipid-binding</keyword>
<keyword id="KW-0472">Membrane</keyword>
<keyword id="KW-1185">Reference proteome</keyword>
<keyword id="KW-0812">Transmembrane</keyword>
<keyword id="KW-1133">Transmembrane helix</keyword>
<keyword id="KW-0813">Transport</keyword>
<evidence type="ECO:0000255" key="1">
    <source>
        <dbReference type="HAMAP-Rule" id="MF_01396"/>
    </source>
</evidence>
<sequence>MENLGDLAQGLALLGKYLGAGLCMGIGAIGPGIGEGNIGAHAMDAMARQPEMVGTITTRMLLADAVAETTGIYSLLIAFMILLVV</sequence>
<feature type="chain" id="PRO_0000365935" description="ATP synthase subunit c">
    <location>
        <begin position="1"/>
        <end position="85"/>
    </location>
</feature>
<feature type="transmembrane region" description="Helical" evidence="1">
    <location>
        <begin position="10"/>
        <end position="30"/>
    </location>
</feature>
<feature type="transmembrane region" description="Helical" evidence="1">
    <location>
        <begin position="65"/>
        <end position="85"/>
    </location>
</feature>
<feature type="site" description="Reversibly protonated during proton transport" evidence="1">
    <location>
        <position position="68"/>
    </location>
</feature>
<comment type="function">
    <text evidence="1">F(1)F(0) ATP synthase produces ATP from ADP in the presence of a proton or sodium gradient. F-type ATPases consist of two structural domains, F(1) containing the extramembraneous catalytic core and F(0) containing the membrane proton channel, linked together by a central stalk and a peripheral stalk. During catalysis, ATP synthesis in the catalytic domain of F(1) is coupled via a rotary mechanism of the central stalk subunits to proton translocation.</text>
</comment>
<comment type="function">
    <text evidence="1">Key component of the F(0) channel; it plays a direct role in translocation across the membrane. A homomeric c-ring of between 10-14 subunits forms the central stalk rotor element with the F(1) delta and epsilon subunits.</text>
</comment>
<comment type="subunit">
    <text evidence="1">F-type ATPases have 2 components, F(1) - the catalytic core - and F(0) - the membrane proton channel. F(1) has five subunits: alpha(3), beta(3), gamma(1), delta(1), epsilon(1). F(0) has three main subunits: a(1), b(2) and c(10-14). The alpha and beta chains form an alternating ring which encloses part of the gamma chain. F(1) is attached to F(0) by a central stalk formed by the gamma and epsilon chains, while a peripheral stalk is formed by the delta and b chains.</text>
</comment>
<comment type="subcellular location">
    <subcellularLocation>
        <location evidence="1">Cell inner membrane</location>
        <topology evidence="1">Multi-pass membrane protein</topology>
    </subcellularLocation>
</comment>
<comment type="similarity">
    <text evidence="1">Belongs to the ATPase C chain family.</text>
</comment>